<gene>
    <name evidence="1" type="primary">hisC</name>
    <name type="ordered locus">YPTS_1669</name>
</gene>
<accession>B2JZM8</accession>
<protein>
    <recommendedName>
        <fullName evidence="1">Histidinol-phosphate aminotransferase</fullName>
        <ecNumber evidence="1">2.6.1.9</ecNumber>
    </recommendedName>
    <alternativeName>
        <fullName evidence="1">Imidazole acetol-phosphate transaminase</fullName>
    </alternativeName>
</protein>
<feature type="chain" id="PRO_1000135435" description="Histidinol-phosphate aminotransferase">
    <location>
        <begin position="1"/>
        <end position="382"/>
    </location>
</feature>
<feature type="region of interest" description="Disordered" evidence="2">
    <location>
        <begin position="360"/>
        <end position="382"/>
    </location>
</feature>
<feature type="modified residue" description="N6-(pyridoxal phosphate)lysine" evidence="1">
    <location>
        <position position="215"/>
    </location>
</feature>
<sequence>MSQSNNVTDLARANIRALTPYMSARRLGGNGDVWLNANEYPLGTEYQLTTQTFNRYPECQPKHVIERYAAYAGLPPEQVLVSRGADEGIELLIRAFCEPGQDAILFCPPTYGMYAVSAETFGVERRTVPAQADWQLDLPAIANNLDQVKVIYVCSPNNPTGNLINPADLQAVLALAQGRAIVAIDEAYIEFCPQASVSNWLKDYPNLVILRTLSKAFALAGLRCGFTLANSDIIQLLLKVIAPYPLSTPVADIAAQALSPKGIEQMRQRVSEVRANRAWLQSALQDCACVEQVFTSESNYLLARFTASSSVFNALWDQGIILRDQNKQPGLANCLRITIGTRQECERVIAALAPLPGIDNSNNIDNQSKTHSQTSSIRKGTI</sequence>
<reference key="1">
    <citation type="submission" date="2008-04" db="EMBL/GenBank/DDBJ databases">
        <title>Complete sequence of Yersinia pseudotuberculosis PB1/+.</title>
        <authorList>
            <person name="Copeland A."/>
            <person name="Lucas S."/>
            <person name="Lapidus A."/>
            <person name="Glavina del Rio T."/>
            <person name="Dalin E."/>
            <person name="Tice H."/>
            <person name="Bruce D."/>
            <person name="Goodwin L."/>
            <person name="Pitluck S."/>
            <person name="Munk A.C."/>
            <person name="Brettin T."/>
            <person name="Detter J.C."/>
            <person name="Han C."/>
            <person name="Tapia R."/>
            <person name="Schmutz J."/>
            <person name="Larimer F."/>
            <person name="Land M."/>
            <person name="Hauser L."/>
            <person name="Challacombe J.F."/>
            <person name="Green L."/>
            <person name="Lindler L.E."/>
            <person name="Nikolich M.P."/>
            <person name="Richardson P."/>
        </authorList>
    </citation>
    <scope>NUCLEOTIDE SEQUENCE [LARGE SCALE GENOMIC DNA]</scope>
    <source>
        <strain>PB1/+</strain>
    </source>
</reference>
<keyword id="KW-0028">Amino-acid biosynthesis</keyword>
<keyword id="KW-0032">Aminotransferase</keyword>
<keyword id="KW-0368">Histidine biosynthesis</keyword>
<keyword id="KW-0663">Pyridoxal phosphate</keyword>
<keyword id="KW-0808">Transferase</keyword>
<name>HIS8_YERPB</name>
<evidence type="ECO:0000255" key="1">
    <source>
        <dbReference type="HAMAP-Rule" id="MF_01023"/>
    </source>
</evidence>
<evidence type="ECO:0000256" key="2">
    <source>
        <dbReference type="SAM" id="MobiDB-lite"/>
    </source>
</evidence>
<dbReference type="EC" id="2.6.1.9" evidence="1"/>
<dbReference type="EMBL" id="CP001048">
    <property type="protein sequence ID" value="ACC88638.1"/>
    <property type="molecule type" value="Genomic_DNA"/>
</dbReference>
<dbReference type="RefSeq" id="WP_011192121.1">
    <property type="nucleotide sequence ID" value="NZ_CP009780.1"/>
</dbReference>
<dbReference type="SMR" id="B2JZM8"/>
<dbReference type="KEGG" id="ypb:YPTS_1669"/>
<dbReference type="PATRIC" id="fig|502801.10.peg.1040"/>
<dbReference type="UniPathway" id="UPA00031">
    <property type="reaction ID" value="UER00012"/>
</dbReference>
<dbReference type="GO" id="GO:0004400">
    <property type="term" value="F:histidinol-phosphate transaminase activity"/>
    <property type="evidence" value="ECO:0007669"/>
    <property type="project" value="UniProtKB-UniRule"/>
</dbReference>
<dbReference type="GO" id="GO:0030170">
    <property type="term" value="F:pyridoxal phosphate binding"/>
    <property type="evidence" value="ECO:0007669"/>
    <property type="project" value="InterPro"/>
</dbReference>
<dbReference type="GO" id="GO:0000105">
    <property type="term" value="P:L-histidine biosynthetic process"/>
    <property type="evidence" value="ECO:0007669"/>
    <property type="project" value="UniProtKB-UniRule"/>
</dbReference>
<dbReference type="CDD" id="cd00609">
    <property type="entry name" value="AAT_like"/>
    <property type="match status" value="1"/>
</dbReference>
<dbReference type="Gene3D" id="3.90.1150.10">
    <property type="entry name" value="Aspartate Aminotransferase, domain 1"/>
    <property type="match status" value="1"/>
</dbReference>
<dbReference type="Gene3D" id="3.40.640.10">
    <property type="entry name" value="Type I PLP-dependent aspartate aminotransferase-like (Major domain)"/>
    <property type="match status" value="1"/>
</dbReference>
<dbReference type="HAMAP" id="MF_01023">
    <property type="entry name" value="HisC_aminotrans_2"/>
    <property type="match status" value="1"/>
</dbReference>
<dbReference type="InterPro" id="IPR001917">
    <property type="entry name" value="Aminotrans_II_pyridoxalP_BS"/>
</dbReference>
<dbReference type="InterPro" id="IPR004839">
    <property type="entry name" value="Aminotransferase_I/II_large"/>
</dbReference>
<dbReference type="InterPro" id="IPR005861">
    <property type="entry name" value="HisP_aminotrans"/>
</dbReference>
<dbReference type="InterPro" id="IPR015424">
    <property type="entry name" value="PyrdxlP-dep_Trfase"/>
</dbReference>
<dbReference type="InterPro" id="IPR015421">
    <property type="entry name" value="PyrdxlP-dep_Trfase_major"/>
</dbReference>
<dbReference type="InterPro" id="IPR015422">
    <property type="entry name" value="PyrdxlP-dep_Trfase_small"/>
</dbReference>
<dbReference type="NCBIfam" id="TIGR01141">
    <property type="entry name" value="hisC"/>
    <property type="match status" value="1"/>
</dbReference>
<dbReference type="PANTHER" id="PTHR42885:SF2">
    <property type="entry name" value="HISTIDINOL-PHOSPHATE AMINOTRANSFERASE"/>
    <property type="match status" value="1"/>
</dbReference>
<dbReference type="PANTHER" id="PTHR42885">
    <property type="entry name" value="HISTIDINOL-PHOSPHATE AMINOTRANSFERASE-RELATED"/>
    <property type="match status" value="1"/>
</dbReference>
<dbReference type="Pfam" id="PF00155">
    <property type="entry name" value="Aminotran_1_2"/>
    <property type="match status" value="1"/>
</dbReference>
<dbReference type="SUPFAM" id="SSF53383">
    <property type="entry name" value="PLP-dependent transferases"/>
    <property type="match status" value="1"/>
</dbReference>
<dbReference type="PROSITE" id="PS00599">
    <property type="entry name" value="AA_TRANSFER_CLASS_2"/>
    <property type="match status" value="1"/>
</dbReference>
<organism>
    <name type="scientific">Yersinia pseudotuberculosis serotype IB (strain PB1/+)</name>
    <dbReference type="NCBI Taxonomy" id="502801"/>
    <lineage>
        <taxon>Bacteria</taxon>
        <taxon>Pseudomonadati</taxon>
        <taxon>Pseudomonadota</taxon>
        <taxon>Gammaproteobacteria</taxon>
        <taxon>Enterobacterales</taxon>
        <taxon>Yersiniaceae</taxon>
        <taxon>Yersinia</taxon>
    </lineage>
</organism>
<proteinExistence type="inferred from homology"/>
<comment type="catalytic activity">
    <reaction evidence="1">
        <text>L-histidinol phosphate + 2-oxoglutarate = 3-(imidazol-4-yl)-2-oxopropyl phosphate + L-glutamate</text>
        <dbReference type="Rhea" id="RHEA:23744"/>
        <dbReference type="ChEBI" id="CHEBI:16810"/>
        <dbReference type="ChEBI" id="CHEBI:29985"/>
        <dbReference type="ChEBI" id="CHEBI:57766"/>
        <dbReference type="ChEBI" id="CHEBI:57980"/>
        <dbReference type="EC" id="2.6.1.9"/>
    </reaction>
</comment>
<comment type="cofactor">
    <cofactor evidence="1">
        <name>pyridoxal 5'-phosphate</name>
        <dbReference type="ChEBI" id="CHEBI:597326"/>
    </cofactor>
</comment>
<comment type="pathway">
    <text evidence="1">Amino-acid biosynthesis; L-histidine biosynthesis; L-histidine from 5-phospho-alpha-D-ribose 1-diphosphate: step 7/9.</text>
</comment>
<comment type="subunit">
    <text evidence="1">Homodimer.</text>
</comment>
<comment type="similarity">
    <text evidence="1">Belongs to the class-II pyridoxal-phosphate-dependent aminotransferase family. Histidinol-phosphate aminotransferase subfamily.</text>
</comment>